<organism>
    <name type="scientific">Halocynthia roretzi</name>
    <name type="common">Sea squirt</name>
    <name type="synonym">Cynthia roretzi</name>
    <dbReference type="NCBI Taxonomy" id="7729"/>
    <lineage>
        <taxon>Eukaryota</taxon>
        <taxon>Metazoa</taxon>
        <taxon>Chordata</taxon>
        <taxon>Tunicata</taxon>
        <taxon>Ascidiacea</taxon>
        <taxon>Stolidobranchia</taxon>
        <taxon>Pyuridae</taxon>
        <taxon>Halocynthia</taxon>
    </lineage>
</organism>
<sequence>MSDGEEDQTAIVCDNGSGLVKSGFAGDDAPRAVFPSTVGRPRHQGVMVGMGQKDSYVGDEAQSKRGILTLKYPIEHGIITNWDDMEKIWHHTFYNELRVAPEEHPTLLTEAPLNPKANREKMTQIMFETFNVPAMYVAIQAVLSLYASGRTTGIVLDSGDGVSHNVPIYEGYALPHAIARLDLAGRDLTDYLMKILTERGYSFVTTAEREIVRDIKEKLCYVALDFEQEMATAASSTSLEKSYELPDGQVITIGNERFRCPETLFQPSFIGMESAGIHETTYNSIMKCDIDIRKDLYANNVLSGGSTMYPGIADRMQKEITALAPSTMKIKIIAPPERKYSVWIGGSILASLSTFQQMWITKQEYDEAGPSIVHRKCF</sequence>
<protein>
    <recommendedName>
        <fullName>Actin, muscle 1A</fullName>
        <ecNumber evidence="1">3.6.4.-</ecNumber>
    </recommendedName>
</protein>
<comment type="function">
    <text>Actins are highly conserved proteins that are involved in various types of cell motility and are ubiquitously expressed in all eukaryotic cells.</text>
</comment>
<comment type="function">
    <text>Multiple isoforms are involved in various cellular functions such as cytoskeleton structure, cell mobility, chromosome movement and muscle contraction.</text>
</comment>
<comment type="catalytic activity">
    <reaction evidence="1">
        <text>ATP + H2O = ADP + phosphate + H(+)</text>
        <dbReference type="Rhea" id="RHEA:13065"/>
        <dbReference type="ChEBI" id="CHEBI:15377"/>
        <dbReference type="ChEBI" id="CHEBI:15378"/>
        <dbReference type="ChEBI" id="CHEBI:30616"/>
        <dbReference type="ChEBI" id="CHEBI:43474"/>
        <dbReference type="ChEBI" id="CHEBI:456216"/>
    </reaction>
</comment>
<comment type="subcellular location">
    <subcellularLocation>
        <location>Cytoplasm</location>
        <location>Cytoskeleton</location>
    </subcellularLocation>
</comment>
<comment type="similarity">
    <text evidence="2">Belongs to the actin family.</text>
</comment>
<evidence type="ECO:0000250" key="1">
    <source>
        <dbReference type="UniProtKB" id="P68137"/>
    </source>
</evidence>
<evidence type="ECO:0000305" key="2"/>
<accession>P53460</accession>
<keyword id="KW-0067">ATP-binding</keyword>
<keyword id="KW-0963">Cytoplasm</keyword>
<keyword id="KW-0206">Cytoskeleton</keyword>
<keyword id="KW-0378">Hydrolase</keyword>
<keyword id="KW-0514">Muscle protein</keyword>
<keyword id="KW-0547">Nucleotide-binding</keyword>
<reference key="1">
    <citation type="journal article" date="1995" name="Dev. Biol.">
        <title>Coexpression and promoter function in two muscle actin gene complexes of different structural organization in the ascidian Halocynthia roretzi.</title>
        <authorList>
            <person name="Kusakabe T."/>
            <person name="Hikosaka A."/>
            <person name="Satoh N."/>
        </authorList>
    </citation>
    <scope>NUCLEOTIDE SEQUENCE [GENOMIC DNA]</scope>
    <source>
        <tissue>Gonad</tissue>
    </source>
</reference>
<feature type="chain" id="PRO_0000088946" description="Actin, muscle 1A">
    <location>
        <begin position="1"/>
        <end position="378"/>
    </location>
</feature>
<dbReference type="EC" id="3.6.4.-" evidence="1"/>
<dbReference type="EMBL" id="D29014">
    <property type="protein sequence ID" value="BAA06100.1"/>
    <property type="molecule type" value="Genomic_DNA"/>
</dbReference>
<dbReference type="SMR" id="P53460"/>
<dbReference type="GO" id="GO:0005737">
    <property type="term" value="C:cytoplasm"/>
    <property type="evidence" value="ECO:0007669"/>
    <property type="project" value="UniProtKB-KW"/>
</dbReference>
<dbReference type="GO" id="GO:0005856">
    <property type="term" value="C:cytoskeleton"/>
    <property type="evidence" value="ECO:0007669"/>
    <property type="project" value="UniProtKB-SubCell"/>
</dbReference>
<dbReference type="GO" id="GO:0005524">
    <property type="term" value="F:ATP binding"/>
    <property type="evidence" value="ECO:0007669"/>
    <property type="project" value="UniProtKB-KW"/>
</dbReference>
<dbReference type="GO" id="GO:0016787">
    <property type="term" value="F:hydrolase activity"/>
    <property type="evidence" value="ECO:0007669"/>
    <property type="project" value="UniProtKB-KW"/>
</dbReference>
<dbReference type="CDD" id="cd10224">
    <property type="entry name" value="ASKHA_NBD_actin"/>
    <property type="match status" value="1"/>
</dbReference>
<dbReference type="FunFam" id="3.30.420.40:FF:000131">
    <property type="entry name" value="Actin, alpha skeletal muscle"/>
    <property type="match status" value="1"/>
</dbReference>
<dbReference type="FunFam" id="3.30.420.40:FF:000291">
    <property type="entry name" value="Actin, alpha skeletal muscle"/>
    <property type="match status" value="1"/>
</dbReference>
<dbReference type="FunFam" id="3.90.640.10:FF:000047">
    <property type="entry name" value="Actin, alpha skeletal muscle"/>
    <property type="match status" value="1"/>
</dbReference>
<dbReference type="FunFam" id="3.30.420.40:FF:000058">
    <property type="entry name" value="Putative actin-related protein 5"/>
    <property type="match status" value="1"/>
</dbReference>
<dbReference type="Gene3D" id="3.30.420.40">
    <property type="match status" value="2"/>
</dbReference>
<dbReference type="Gene3D" id="3.90.640.10">
    <property type="entry name" value="Actin, Chain A, domain 4"/>
    <property type="match status" value="1"/>
</dbReference>
<dbReference type="InterPro" id="IPR004000">
    <property type="entry name" value="Actin"/>
</dbReference>
<dbReference type="InterPro" id="IPR020902">
    <property type="entry name" value="Actin/actin-like_CS"/>
</dbReference>
<dbReference type="InterPro" id="IPR004001">
    <property type="entry name" value="Actin_CS"/>
</dbReference>
<dbReference type="InterPro" id="IPR043129">
    <property type="entry name" value="ATPase_NBD"/>
</dbReference>
<dbReference type="PANTHER" id="PTHR11937">
    <property type="entry name" value="ACTIN"/>
    <property type="match status" value="1"/>
</dbReference>
<dbReference type="Pfam" id="PF00022">
    <property type="entry name" value="Actin"/>
    <property type="match status" value="1"/>
</dbReference>
<dbReference type="PRINTS" id="PR00190">
    <property type="entry name" value="ACTIN"/>
</dbReference>
<dbReference type="SMART" id="SM00268">
    <property type="entry name" value="ACTIN"/>
    <property type="match status" value="1"/>
</dbReference>
<dbReference type="SUPFAM" id="SSF53067">
    <property type="entry name" value="Actin-like ATPase domain"/>
    <property type="match status" value="2"/>
</dbReference>
<dbReference type="PROSITE" id="PS00406">
    <property type="entry name" value="ACTINS_1"/>
    <property type="match status" value="1"/>
</dbReference>
<dbReference type="PROSITE" id="PS00432">
    <property type="entry name" value="ACTINS_2"/>
    <property type="match status" value="1"/>
</dbReference>
<dbReference type="PROSITE" id="PS01132">
    <property type="entry name" value="ACTINS_ACT_LIKE"/>
    <property type="match status" value="1"/>
</dbReference>
<proteinExistence type="inferred from homology"/>
<gene>
    <name type="primary">MA1A</name>
</gene>
<name>ACT1_HALRO</name>